<proteinExistence type="evidence at transcript level"/>
<comment type="subcellular location">
    <subcellularLocation>
        <location evidence="1">Nucleus</location>
    </subcellularLocation>
</comment>
<comment type="similarity">
    <text evidence="3">Belongs to the H2.0 homeobox family.</text>
</comment>
<sequence length="340" mass="36421">MLPSAVAAHAGAYWDVVASSSLLNFPAAPGFGNLGKSFLIENLLRAGGAPPLGLPPPQHHGSAAALGAGAQVRSLPASPVPLKLCPAAEPVSPGGAPYGTRWAFQVLSPSADGARLPGRAPGDPDCAFQPPAPAPSKPFFLSAPPFYSACCGGSCRRPASPTAFAREESVLPLLTQESTSKVRRGILRRAVFSEDQRKALEKMFQKQKYISKTDRKKLAINLGLKESQVKIWFQNRRMKWRNSKEKEVLSNRCLQEVVLQEDPLSRSALGFPSPCASLWEVSQQHPSPGWRENSPEPSERLIQGSPGAEALPPEAKSLQGALYLCSEEDARDKNALTGTV</sequence>
<reference key="1">
    <citation type="submission" date="2006-06" db="EMBL/GenBank/DDBJ databases">
        <authorList>
            <consortium name="NIH - Mammalian Gene Collection (MGC) project"/>
        </authorList>
    </citation>
    <scope>NUCLEOTIDE SEQUENCE [LARGE SCALE MRNA]</scope>
    <source>
        <strain>Hereford</strain>
        <tissue>Thalamus</tissue>
    </source>
</reference>
<dbReference type="EMBL" id="BC118220">
    <property type="protein sequence ID" value="AAI18221.1"/>
    <property type="molecule type" value="mRNA"/>
</dbReference>
<dbReference type="RefSeq" id="NP_001068929.1">
    <property type="nucleotide sequence ID" value="NM_001075461.1"/>
</dbReference>
<dbReference type="SMR" id="Q17QR5"/>
<dbReference type="FunCoup" id="Q17QR5">
    <property type="interactions" value="70"/>
</dbReference>
<dbReference type="STRING" id="9913.ENSBTAP00000008720"/>
<dbReference type="PaxDb" id="9913-ENSBTAP00000008720"/>
<dbReference type="Ensembl" id="ENSBTAT00000008720.5">
    <property type="protein sequence ID" value="ENSBTAP00000008720.3"/>
    <property type="gene ID" value="ENSBTAG00000006635.5"/>
</dbReference>
<dbReference type="GeneID" id="510669"/>
<dbReference type="KEGG" id="bta:510669"/>
<dbReference type="CTD" id="440097"/>
<dbReference type="VEuPathDB" id="HostDB:ENSBTAG00000006635"/>
<dbReference type="VGNC" id="VGNC:27898">
    <property type="gene designation" value="DBX2"/>
</dbReference>
<dbReference type="eggNOG" id="KOG0488">
    <property type="taxonomic scope" value="Eukaryota"/>
</dbReference>
<dbReference type="GeneTree" id="ENSGT00950000183093"/>
<dbReference type="HOGENOM" id="CLU_053401_2_0_1"/>
<dbReference type="InParanoid" id="Q17QR5"/>
<dbReference type="OMA" id="FPARWAF"/>
<dbReference type="OrthoDB" id="6159439at2759"/>
<dbReference type="TreeFam" id="TF350735"/>
<dbReference type="Proteomes" id="UP000009136">
    <property type="component" value="Chromosome 5"/>
</dbReference>
<dbReference type="Bgee" id="ENSBTAG00000006635">
    <property type="expression patterns" value="Expressed in oocyte and 27 other cell types or tissues"/>
</dbReference>
<dbReference type="GO" id="GO:0005634">
    <property type="term" value="C:nucleus"/>
    <property type="evidence" value="ECO:0007669"/>
    <property type="project" value="UniProtKB-SubCell"/>
</dbReference>
<dbReference type="GO" id="GO:0003677">
    <property type="term" value="F:DNA binding"/>
    <property type="evidence" value="ECO:0007669"/>
    <property type="project" value="UniProtKB-KW"/>
</dbReference>
<dbReference type="GO" id="GO:0000981">
    <property type="term" value="F:DNA-binding transcription factor activity, RNA polymerase II-specific"/>
    <property type="evidence" value="ECO:0007669"/>
    <property type="project" value="InterPro"/>
</dbReference>
<dbReference type="GO" id="GO:0007173">
    <property type="term" value="P:epidermal growth factor receptor signaling pathway"/>
    <property type="evidence" value="ECO:0007669"/>
    <property type="project" value="Ensembl"/>
</dbReference>
<dbReference type="GO" id="GO:0000086">
    <property type="term" value="P:G2/M transition of mitotic cell cycle"/>
    <property type="evidence" value="ECO:0007669"/>
    <property type="project" value="Ensembl"/>
</dbReference>
<dbReference type="GO" id="GO:0010467">
    <property type="term" value="P:gene expression"/>
    <property type="evidence" value="ECO:0007669"/>
    <property type="project" value="Ensembl"/>
</dbReference>
<dbReference type="GO" id="GO:0061351">
    <property type="term" value="P:neural precursor cell proliferation"/>
    <property type="evidence" value="ECO:0007669"/>
    <property type="project" value="Ensembl"/>
</dbReference>
<dbReference type="GO" id="GO:0006357">
    <property type="term" value="P:regulation of transcription by RNA polymerase II"/>
    <property type="evidence" value="ECO:0000318"/>
    <property type="project" value="GO_Central"/>
</dbReference>
<dbReference type="CDD" id="cd00086">
    <property type="entry name" value="homeodomain"/>
    <property type="match status" value="1"/>
</dbReference>
<dbReference type="FunFam" id="1.10.10.60:FF:000187">
    <property type="entry name" value="homeobox protein DBX2"/>
    <property type="match status" value="1"/>
</dbReference>
<dbReference type="Gene3D" id="1.10.10.60">
    <property type="entry name" value="Homeodomain-like"/>
    <property type="match status" value="1"/>
</dbReference>
<dbReference type="InterPro" id="IPR051662">
    <property type="entry name" value="H2.0_Homeobox_NeuralPatt"/>
</dbReference>
<dbReference type="InterPro" id="IPR001356">
    <property type="entry name" value="HD"/>
</dbReference>
<dbReference type="InterPro" id="IPR020479">
    <property type="entry name" value="HD_metazoa"/>
</dbReference>
<dbReference type="InterPro" id="IPR017970">
    <property type="entry name" value="Homeobox_CS"/>
</dbReference>
<dbReference type="InterPro" id="IPR009057">
    <property type="entry name" value="Homeodomain-like_sf"/>
</dbReference>
<dbReference type="InterPro" id="IPR000047">
    <property type="entry name" value="HTH_motif"/>
</dbReference>
<dbReference type="PANTHER" id="PTHR24331">
    <property type="entry name" value="DBX"/>
    <property type="match status" value="1"/>
</dbReference>
<dbReference type="PANTHER" id="PTHR24331:SF4">
    <property type="entry name" value="HOMEOBOX PROTEIN DBX2"/>
    <property type="match status" value="1"/>
</dbReference>
<dbReference type="Pfam" id="PF00046">
    <property type="entry name" value="Homeodomain"/>
    <property type="match status" value="1"/>
</dbReference>
<dbReference type="PRINTS" id="PR00024">
    <property type="entry name" value="HOMEOBOX"/>
</dbReference>
<dbReference type="PRINTS" id="PR00031">
    <property type="entry name" value="HTHREPRESSR"/>
</dbReference>
<dbReference type="SMART" id="SM00389">
    <property type="entry name" value="HOX"/>
    <property type="match status" value="1"/>
</dbReference>
<dbReference type="SUPFAM" id="SSF46689">
    <property type="entry name" value="Homeodomain-like"/>
    <property type="match status" value="1"/>
</dbReference>
<dbReference type="PROSITE" id="PS00027">
    <property type="entry name" value="HOMEOBOX_1"/>
    <property type="match status" value="1"/>
</dbReference>
<dbReference type="PROSITE" id="PS50071">
    <property type="entry name" value="HOMEOBOX_2"/>
    <property type="match status" value="1"/>
</dbReference>
<protein>
    <recommendedName>
        <fullName>Homeobox protein DBX2</fullName>
    </recommendedName>
    <alternativeName>
        <fullName>Developing brain homeobox protein 2</fullName>
    </alternativeName>
</protein>
<gene>
    <name type="primary">DBX2</name>
</gene>
<evidence type="ECO:0000255" key="1">
    <source>
        <dbReference type="PROSITE-ProRule" id="PRU00108"/>
    </source>
</evidence>
<evidence type="ECO:0000256" key="2">
    <source>
        <dbReference type="SAM" id="MobiDB-lite"/>
    </source>
</evidence>
<evidence type="ECO:0000305" key="3"/>
<accession>Q17QR5</accession>
<keyword id="KW-0238">DNA-binding</keyword>
<keyword id="KW-0371">Homeobox</keyword>
<keyword id="KW-0539">Nucleus</keyword>
<keyword id="KW-1185">Reference proteome</keyword>
<feature type="chain" id="PRO_0000302848" description="Homeobox protein DBX2">
    <location>
        <begin position="1"/>
        <end position="340"/>
    </location>
</feature>
<feature type="DNA-binding region" description="Homeobox" evidence="1">
    <location>
        <begin position="185"/>
        <end position="244"/>
    </location>
</feature>
<feature type="region of interest" description="Disordered" evidence="2">
    <location>
        <begin position="283"/>
        <end position="313"/>
    </location>
</feature>
<organism>
    <name type="scientific">Bos taurus</name>
    <name type="common">Bovine</name>
    <dbReference type="NCBI Taxonomy" id="9913"/>
    <lineage>
        <taxon>Eukaryota</taxon>
        <taxon>Metazoa</taxon>
        <taxon>Chordata</taxon>
        <taxon>Craniata</taxon>
        <taxon>Vertebrata</taxon>
        <taxon>Euteleostomi</taxon>
        <taxon>Mammalia</taxon>
        <taxon>Eutheria</taxon>
        <taxon>Laurasiatheria</taxon>
        <taxon>Artiodactyla</taxon>
        <taxon>Ruminantia</taxon>
        <taxon>Pecora</taxon>
        <taxon>Bovidae</taxon>
        <taxon>Bovinae</taxon>
        <taxon>Bos</taxon>
    </lineage>
</organism>
<name>DBX2_BOVIN</name>